<evidence type="ECO:0000256" key="1">
    <source>
        <dbReference type="SAM" id="MobiDB-lite"/>
    </source>
</evidence>
<evidence type="ECO:0000305" key="2"/>
<evidence type="ECO:0000305" key="3">
    <source>
    </source>
</evidence>
<name>YN78_YEAST</name>
<feature type="chain" id="PRO_0000203362" description="Putative uncharacterized protein YNL338W">
    <location>
        <begin position="1"/>
        <end position="52"/>
    </location>
</feature>
<feature type="region of interest" description="Disordered" evidence="1">
    <location>
        <begin position="1"/>
        <end position="52"/>
    </location>
</feature>
<feature type="compositionally biased region" description="Basic residues" evidence="1">
    <location>
        <begin position="35"/>
        <end position="45"/>
    </location>
</feature>
<reference key="1">
    <citation type="journal article" date="1997" name="Nature">
        <title>The nucleotide sequence of Saccharomyces cerevisiae chromosome XIV and its evolutionary implications.</title>
        <authorList>
            <person name="Philippsen P."/>
            <person name="Kleine K."/>
            <person name="Poehlmann R."/>
            <person name="Duesterhoeft A."/>
            <person name="Hamberg K."/>
            <person name="Hegemann J.H."/>
            <person name="Obermaier B."/>
            <person name="Urrestarazu L.A."/>
            <person name="Aert R."/>
            <person name="Albermann K."/>
            <person name="Altmann R."/>
            <person name="Andre B."/>
            <person name="Baladron V."/>
            <person name="Ballesta J.P.G."/>
            <person name="Becam A.-M."/>
            <person name="Beinhauer J.D."/>
            <person name="Boskovic J."/>
            <person name="Buitrago M.J."/>
            <person name="Bussereau F."/>
            <person name="Coster F."/>
            <person name="Crouzet M."/>
            <person name="D'Angelo M."/>
            <person name="Dal Pero F."/>
            <person name="De Antoni A."/>
            <person name="del Rey F."/>
            <person name="Doignon F."/>
            <person name="Domdey H."/>
            <person name="Dubois E."/>
            <person name="Fiedler T.A."/>
            <person name="Fleig U."/>
            <person name="Floeth M."/>
            <person name="Fritz C."/>
            <person name="Gaillardin C."/>
            <person name="Garcia-Cantalejo J.M."/>
            <person name="Glansdorff N."/>
            <person name="Goffeau A."/>
            <person name="Gueldener U."/>
            <person name="Herbert C.J."/>
            <person name="Heumann K."/>
            <person name="Heuss-Neitzel D."/>
            <person name="Hilbert H."/>
            <person name="Hinni K."/>
            <person name="Iraqui Houssaini I."/>
            <person name="Jacquet M."/>
            <person name="Jimenez A."/>
            <person name="Jonniaux J.-L."/>
            <person name="Karpfinger-Hartl L."/>
            <person name="Lanfranchi G."/>
            <person name="Lepingle A."/>
            <person name="Levesque H."/>
            <person name="Lyck R."/>
            <person name="Maftahi M."/>
            <person name="Mallet L."/>
            <person name="Maurer C.T.C."/>
            <person name="Messenguy F."/>
            <person name="Mewes H.-W."/>
            <person name="Moestl D."/>
            <person name="Nasr F."/>
            <person name="Nicaud J.-M."/>
            <person name="Niedenthal R.K."/>
            <person name="Pandolfo D."/>
            <person name="Pierard A."/>
            <person name="Piravandi E."/>
            <person name="Planta R.J."/>
            <person name="Pohl T.M."/>
            <person name="Purnelle B."/>
            <person name="Rebischung C."/>
            <person name="Remacha M.A."/>
            <person name="Revuelta J.L."/>
            <person name="Rinke M."/>
            <person name="Saiz J.E."/>
            <person name="Sartorello F."/>
            <person name="Scherens B."/>
            <person name="Sen-Gupta M."/>
            <person name="Soler-Mira A."/>
            <person name="Urbanus J.H.M."/>
            <person name="Valle G."/>
            <person name="Van Dyck L."/>
            <person name="Verhasselt P."/>
            <person name="Vierendeels F."/>
            <person name="Vissers S."/>
            <person name="Voet M."/>
            <person name="Volckaert G."/>
            <person name="Wach A."/>
            <person name="Wambutt R."/>
            <person name="Wedler H."/>
            <person name="Zollner A."/>
            <person name="Hani J."/>
        </authorList>
    </citation>
    <scope>NUCLEOTIDE SEQUENCE [LARGE SCALE GENOMIC DNA]</scope>
    <source>
        <strain>ATCC 204508 / S288c</strain>
    </source>
</reference>
<reference key="2">
    <citation type="journal article" date="2014" name="G3 (Bethesda)">
        <title>The reference genome sequence of Saccharomyces cerevisiae: Then and now.</title>
        <authorList>
            <person name="Engel S.R."/>
            <person name="Dietrich F.S."/>
            <person name="Fisk D.G."/>
            <person name="Binkley G."/>
            <person name="Balakrishnan R."/>
            <person name="Costanzo M.C."/>
            <person name="Dwight S.S."/>
            <person name="Hitz B.C."/>
            <person name="Karra K."/>
            <person name="Nash R.S."/>
            <person name="Weng S."/>
            <person name="Wong E.D."/>
            <person name="Lloyd P."/>
            <person name="Skrzypek M.S."/>
            <person name="Miyasato S.R."/>
            <person name="Simison M."/>
            <person name="Cherry J.M."/>
        </authorList>
    </citation>
    <scope>GENOME REANNOTATION</scope>
    <source>
        <strain>ATCC 204508 / S288c</strain>
    </source>
</reference>
<accession>P53820</accession>
<protein>
    <recommendedName>
        <fullName>Putative uncharacterized protein YNL338W</fullName>
    </recommendedName>
</protein>
<sequence length="52" mass="5951">MSLRPCLTPSSMQYSDIYIPTPTPTHHTHTPTPHPHPHTHTHTHHNPNPTLF</sequence>
<organism>
    <name type="scientific">Saccharomyces cerevisiae (strain ATCC 204508 / S288c)</name>
    <name type="common">Baker's yeast</name>
    <dbReference type="NCBI Taxonomy" id="559292"/>
    <lineage>
        <taxon>Eukaryota</taxon>
        <taxon>Fungi</taxon>
        <taxon>Dikarya</taxon>
        <taxon>Ascomycota</taxon>
        <taxon>Saccharomycotina</taxon>
        <taxon>Saccharomycetes</taxon>
        <taxon>Saccharomycetales</taxon>
        <taxon>Saccharomycetaceae</taxon>
        <taxon>Saccharomyces</taxon>
    </lineage>
</organism>
<proteinExistence type="uncertain"/>
<comment type="miscellaneous">
    <text evidence="2">Completely overlaps TEL14L-XC, a telomeric X element core sequence on the left arm of chromosome XIV.</text>
</comment>
<comment type="caution">
    <text evidence="3">Product of a dubious gene prediction unlikely to encode a functional protein. Because of that it is not part of the S.cerevisiae S288c complete/reference proteome set.</text>
</comment>
<dbReference type="EMBL" id="Z71614">
    <property type="protein sequence ID" value="CAA96274.1"/>
    <property type="molecule type" value="Genomic_DNA"/>
</dbReference>
<dbReference type="EMBL" id="Z71613">
    <property type="protein sequence ID" value="CAA96273.1"/>
    <property type="molecule type" value="Genomic_DNA"/>
</dbReference>
<dbReference type="PIR" id="S63324">
    <property type="entry name" value="S63324"/>
</dbReference>
<dbReference type="EnsemblFungi" id="YNL338W_mRNA">
    <property type="protein sequence ID" value="YNL338W"/>
    <property type="gene ID" value="YNL338W"/>
</dbReference>
<dbReference type="AGR" id="SGD:S000005282"/>
<dbReference type="SGD" id="S000005282">
    <property type="gene designation" value="YNL338W"/>
</dbReference>
<dbReference type="HOGENOM" id="CLU_212309_0_0_1"/>
<gene>
    <name type="ordered locus">YNL338W</name>
    <name type="ORF">N0170</name>
</gene>